<sequence length="964" mass="85995">GGISVPGPMGPSGPRGLPGPPGAPGPQGFQGPPGEPGEPGSGPMGPRGPPGPPGKNGDDGEAGKPGRPGERGPPGPQGARGLPGTAGLPGMKGHRGFSGLDGAKGDAGPAGPKQMGPRGPGERGRPGASGPAGARGNDGATGAAGPPGPTGPAGPPGFPGAVGAKGEAGPQGARGSEGPQGVRGEPGPPGPAGAAGPAGNPGADGQPGAKGANGAPGIAGAPGFPGARGPSGPQGPSGPPGPKGNSGEPGAPGSKAKGEPGPTGIQGPPGPAGEEGKRGARGEPGPTGLPGPPGERGGPGSRGFPGADGVAGPKGPAGERGSPGPAGPKGSPGEAGRPGEAGLPGAKGLTGSPGSPGPDGKTGPPGPAGQDGRPGPGPPGARGQAGVMGFPGPKGAAGEPGKAGERGVPGPPGAVGPAGKDGEAGAQGPPGPAGPAGERGEQGPAGPGFQGLPGPAGPPGEAGKPGEQGVPGDLGAPGPSGARGERGFPGERGVQGPPGPAGPRGLQGMPGERGAAGLPGPKGDRGDAGPKGADGAPGKDGVRGLTGPIGPPGPAGAPGDKGESGPSGPAGPTGARGAPGDRGEPGPPGPAGFAGPPGADGQPGAKGEPGDAGAKGDAGPPGPAGPTGPPGPIGNLGAPGPKGARGSAGPPGATGFPGAAGRVGPPGPSGNAGPPGPPGPVGKEGGKGPRGETGPAEVGPPGPPGPGEKGSPGADGPAGAPGTPGPQGISGQRGVVGLPGQRGERGFPGLPGPSGEPGKQGPSGSSGERGPPGPMGPPGLAGPPGESGREGPGAEGSPGRDGSPGPKGDRGETGPGPPGAPGAPGAPGPVGPAGKSGDRGETGPGPAGPAGPAGARGPAGPQGPRGDKGETGEQGDRGIKGHRGFSGLQGPAGPPGSPGEQGPSGASGPAGPRGPPGSAGSPGKDGLNGLPGPIGPPGPRGRTGDAGPVGPPGPPGPPGPPGPP</sequence>
<evidence type="ECO:0000250" key="1">
    <source>
        <dbReference type="UniProtKB" id="P02452"/>
    </source>
</evidence>
<evidence type="ECO:0000250" key="2">
    <source>
        <dbReference type="UniProtKB" id="P02454"/>
    </source>
</evidence>
<evidence type="ECO:0000250" key="3">
    <source>
        <dbReference type="UniProtKB" id="P02457"/>
    </source>
</evidence>
<evidence type="ECO:0000250" key="4">
    <source>
        <dbReference type="UniProtKB" id="P11087"/>
    </source>
</evidence>
<evidence type="ECO:0000256" key="5">
    <source>
        <dbReference type="SAM" id="MobiDB-lite"/>
    </source>
</evidence>
<evidence type="ECO:0000269" key="6">
    <source>
    </source>
</evidence>
<evidence type="ECO:0000303" key="7">
    <source>
    </source>
</evidence>
<evidence type="ECO:0000305" key="8"/>
<keyword id="KW-0903">Direct protein sequencing</keyword>
<keyword id="KW-0952">Extinct organism protein</keyword>
<keyword id="KW-0272">Extracellular matrix</keyword>
<keyword id="KW-0325">Glycoprotein</keyword>
<keyword id="KW-0379">Hydroxylation</keyword>
<keyword id="KW-0597">Phosphoprotein</keyword>
<keyword id="KW-0964">Secreted</keyword>
<accession>C0HLJ1</accession>
<feature type="chain" id="PRO_0000448454" description="Collagen alpha-1(I) chain">
    <location>
        <begin position="1"/>
        <end position="964"/>
    </location>
</feature>
<feature type="region of interest" description="Disordered" evidence="5">
    <location>
        <begin position="1"/>
        <end position="964"/>
    </location>
</feature>
<feature type="compositionally biased region" description="Basic and acidic residues" evidence="5">
    <location>
        <begin position="56"/>
        <end position="70"/>
    </location>
</feature>
<feature type="compositionally biased region" description="Low complexity" evidence="5">
    <location>
        <begin position="106"/>
        <end position="117"/>
    </location>
</feature>
<feature type="compositionally biased region" description="Low complexity" evidence="5">
    <location>
        <begin position="126"/>
        <end position="144"/>
    </location>
</feature>
<feature type="compositionally biased region" description="Pro residues" evidence="5">
    <location>
        <begin position="146"/>
        <end position="158"/>
    </location>
</feature>
<feature type="compositionally biased region" description="Low complexity" evidence="5">
    <location>
        <begin position="192"/>
        <end position="231"/>
    </location>
</feature>
<feature type="compositionally biased region" description="Gly residues" evidence="5">
    <location>
        <begin position="294"/>
        <end position="303"/>
    </location>
</feature>
<feature type="compositionally biased region" description="Low complexity" evidence="5">
    <location>
        <begin position="347"/>
        <end position="373"/>
    </location>
</feature>
<feature type="compositionally biased region" description="Low complexity" evidence="5">
    <location>
        <begin position="381"/>
        <end position="400"/>
    </location>
</feature>
<feature type="compositionally biased region" description="Low complexity" evidence="5">
    <location>
        <begin position="459"/>
        <end position="468"/>
    </location>
</feature>
<feature type="compositionally biased region" description="Low complexity" evidence="5">
    <location>
        <begin position="564"/>
        <end position="578"/>
    </location>
</feature>
<feature type="compositionally biased region" description="Low complexity" evidence="5">
    <location>
        <begin position="591"/>
        <end position="618"/>
    </location>
</feature>
<feature type="compositionally biased region" description="Pro residues" evidence="5">
    <location>
        <begin position="620"/>
        <end position="632"/>
    </location>
</feature>
<feature type="compositionally biased region" description="Low complexity" evidence="5">
    <location>
        <begin position="647"/>
        <end position="663"/>
    </location>
</feature>
<feature type="compositionally biased region" description="Low complexity" evidence="5">
    <location>
        <begin position="709"/>
        <end position="721"/>
    </location>
</feature>
<feature type="compositionally biased region" description="Pro residues" evidence="5">
    <location>
        <begin position="771"/>
        <end position="781"/>
    </location>
</feature>
<feature type="compositionally biased region" description="Pro residues" evidence="5">
    <location>
        <begin position="815"/>
        <end position="830"/>
    </location>
</feature>
<feature type="compositionally biased region" description="Low complexity" evidence="5">
    <location>
        <begin position="850"/>
        <end position="864"/>
    </location>
</feature>
<feature type="compositionally biased region" description="Basic and acidic residues" evidence="5">
    <location>
        <begin position="865"/>
        <end position="879"/>
    </location>
</feature>
<feature type="compositionally biased region" description="Low complexity" evidence="5">
    <location>
        <begin position="898"/>
        <end position="931"/>
    </location>
</feature>
<feature type="compositionally biased region" description="Pro residues" evidence="5">
    <location>
        <begin position="949"/>
        <end position="964"/>
    </location>
</feature>
<feature type="modified residue" description="4-hydroxyproline" evidence="3">
    <location>
        <position position="18"/>
    </location>
</feature>
<feature type="modified residue" description="4-hydroxyproline" evidence="3">
    <location>
        <position position="21"/>
    </location>
</feature>
<feature type="modified residue" description="4-hydroxyproline" evidence="3">
    <location>
        <position position="24"/>
    </location>
</feature>
<feature type="modified residue" description="4-hydroxyproline" evidence="3">
    <location>
        <position position="33"/>
    </location>
</feature>
<feature type="modified residue" description="4-hydroxyproline" evidence="3">
    <location>
        <position position="36"/>
    </location>
</feature>
<feature type="modified residue" description="4-hydroxyproline" evidence="3">
    <location>
        <position position="39"/>
    </location>
</feature>
<feature type="modified residue" description="4-hydroxyproline" evidence="3">
    <location>
        <position position="53"/>
    </location>
</feature>
<feature type="modified residue" description="4-hydroxyproline" evidence="3">
    <location>
        <position position="68"/>
    </location>
</feature>
<feature type="modified residue" description="4-hydroxyproline" evidence="3">
    <location>
        <position position="74"/>
    </location>
</feature>
<feature type="modified residue" description="4-hydroxyproline" evidence="3">
    <location>
        <position position="83"/>
    </location>
</feature>
<feature type="modified residue" description="4-hydroxyproline" evidence="3">
    <location>
        <position position="89"/>
    </location>
</feature>
<feature type="modified residue" description="5-hydroxylysine; alternate" evidence="1">
    <location>
        <position position="92"/>
    </location>
</feature>
<feature type="modified residue" description="Phosphoserine" evidence="2">
    <location>
        <position position="98"/>
    </location>
</feature>
<feature type="modified residue" description="4-hydroxyproline" evidence="3">
    <location>
        <position position="126"/>
    </location>
</feature>
<feature type="modified residue" description="4-hydroxyproline" evidence="3">
    <location>
        <position position="147"/>
    </location>
</feature>
<feature type="modified residue" description="4-hydroxyproline" evidence="3">
    <location>
        <position position="156"/>
    </location>
</feature>
<feature type="modified residue" description="4-hydroxyproline" evidence="3">
    <location>
        <position position="159"/>
    </location>
</feature>
<feature type="modified residue" description="4-hydroxyproline" evidence="3">
    <location>
        <position position="186"/>
    </location>
</feature>
<feature type="modified residue" description="4-hydroxyproline" evidence="3">
    <location>
        <position position="189"/>
    </location>
</feature>
<feature type="modified residue" description="4-hydroxyproline" evidence="3">
    <location>
        <position position="201"/>
    </location>
</feature>
<feature type="modified residue" description="4-hydroxyproline" evidence="3">
    <location>
        <position position="207"/>
    </location>
</feature>
<feature type="modified residue" description="4-hydroxyproline" evidence="3">
    <location>
        <position position="216"/>
    </location>
</feature>
<feature type="modified residue" description="4-hydroxyproline" evidence="3">
    <location>
        <position position="222"/>
    </location>
</feature>
<feature type="modified residue" description="4-hydroxyproline" evidence="3">
    <location>
        <position position="225"/>
    </location>
</feature>
<feature type="modified residue" description="4-hydroxyproline" evidence="3">
    <location>
        <position position="240"/>
    </location>
</feature>
<feature type="modified residue" description="5-hydroxylysine" evidence="3">
    <location>
        <position position="243"/>
    </location>
</feature>
<feature type="modified residue" description="4-hydroxyproline" evidence="3">
    <location>
        <position position="249"/>
    </location>
</feature>
<feature type="modified residue" description="4-hydroxyproline" evidence="3">
    <location>
        <position position="252"/>
    </location>
</feature>
<feature type="modified residue" description="4-hydroxyproline" evidence="3">
    <location>
        <position position="260"/>
    </location>
</feature>
<feature type="modified residue" description="4-hydroxyproline" evidence="3">
    <location>
        <position position="269"/>
    </location>
</feature>
<feature type="modified residue" description="4-hydroxyproline" evidence="3">
    <location>
        <position position="284"/>
    </location>
</feature>
<feature type="modified residue" description="4-hydroxyproline" evidence="3">
    <location>
        <position position="290"/>
    </location>
</feature>
<feature type="modified residue" description="4-hydroxyproline" evidence="3">
    <location>
        <position position="299"/>
    </location>
</feature>
<feature type="modified residue" description="4-hydroxyproline" evidence="3">
    <location>
        <position position="305"/>
    </location>
</feature>
<feature type="modified residue" description="5-hydroxylysine" evidence="3">
    <location>
        <position position="314"/>
    </location>
</feature>
<feature type="modified residue" description="4-hydroxyproline" evidence="3">
    <location>
        <position position="323"/>
    </location>
</feature>
<feature type="modified residue" description="4-hydroxyproline" evidence="3">
    <location>
        <position position="332"/>
    </location>
</feature>
<feature type="modified residue" description="4-hydroxyproline" evidence="3">
    <location>
        <position position="338"/>
    </location>
</feature>
<feature type="modified residue" description="4-hydroxyproline" evidence="3">
    <location>
        <position position="344"/>
    </location>
</feature>
<feature type="modified residue" description="4-hydroxyproline" evidence="3">
    <location>
        <position position="353"/>
    </location>
</feature>
<feature type="modified residue" description="4-hydroxyproline" evidence="3">
    <location>
        <position position="356"/>
    </location>
</feature>
<feature type="modified residue" description="4-hydroxyproline" evidence="3">
    <location>
        <position position="365"/>
    </location>
</feature>
<feature type="modified residue" description="4-hydroxyproline" evidence="3">
    <location>
        <position position="374"/>
    </location>
</feature>
<feature type="modified residue" description="4-hydroxyproline" evidence="3">
    <location>
        <position position="379"/>
    </location>
</feature>
<feature type="modified residue" description="4-hydroxyproline" evidence="3">
    <location>
        <position position="391"/>
    </location>
</feature>
<feature type="modified residue" description="4-hydroxyproline" evidence="3">
    <location>
        <position position="400"/>
    </location>
</feature>
<feature type="modified residue" description="4-hydroxyproline" evidence="3">
    <location>
        <position position="409"/>
    </location>
</feature>
<feature type="modified residue" description="4-hydroxyproline" evidence="3">
    <location>
        <position position="412"/>
    </location>
</feature>
<feature type="modified residue" description="4-hydroxyproline" evidence="3">
    <location>
        <position position="430"/>
    </location>
</feature>
<feature type="modified residue" description="4-hydroxyproline" evidence="3">
    <location>
        <position position="447"/>
    </location>
</feature>
<feature type="modified residue" description="4-hydroxyproline" evidence="3">
    <location>
        <position position="453"/>
    </location>
</feature>
<feature type="modified residue" description="4-hydroxyproline" evidence="3">
    <location>
        <position position="459"/>
    </location>
</feature>
<feature type="modified residue" description="4-hydroxyproline" evidence="3">
    <location>
        <position position="465"/>
    </location>
</feature>
<feature type="modified residue" description="4-hydroxyproline" evidence="3">
    <location>
        <position position="471"/>
    </location>
</feature>
<feature type="modified residue" description="4-hydroxyproline" evidence="3">
    <location>
        <position position="477"/>
    </location>
</feature>
<feature type="modified residue" description="4-hydroxyproline" evidence="3">
    <location>
        <position position="489"/>
    </location>
</feature>
<feature type="modified residue" description="4-hydroxyproline" evidence="3">
    <location>
        <position position="498"/>
    </location>
</feature>
<feature type="modified residue" description="4-hydroxyproline" evidence="3">
    <location>
        <position position="510"/>
    </location>
</feature>
<feature type="modified residue" description="4-hydroxyproline" evidence="3">
    <location>
        <position position="519"/>
    </location>
</feature>
<feature type="modified residue" description="5-hydroxylysine" evidence="3">
    <location>
        <position position="531"/>
    </location>
</feature>
<feature type="modified residue" description="4-hydroxyproline" evidence="3">
    <location>
        <position position="537"/>
    </location>
</feature>
<feature type="modified residue" description="4-hydroxyproline" evidence="3">
    <location>
        <position position="552"/>
    </location>
</feature>
<feature type="modified residue" description="4-hydroxyproline" evidence="3">
    <location>
        <position position="558"/>
    </location>
</feature>
<feature type="modified residue" description="Phosphoserine" evidence="2">
    <location>
        <position position="567"/>
    </location>
</feature>
<feature type="modified residue" description="4-hydroxyproline" evidence="3">
    <location>
        <position position="579"/>
    </location>
</feature>
<feature type="modified residue" description="4-hydroxyproline" evidence="3">
    <location>
        <position position="585"/>
    </location>
</feature>
<feature type="modified residue" description="4-hydroxyproline" evidence="3">
    <location>
        <position position="588"/>
    </location>
</feature>
<feature type="modified residue" description="4-hydroxyproline" evidence="3">
    <location>
        <position position="597"/>
    </location>
</feature>
<feature type="modified residue" description="4-hydroxyproline" evidence="3">
    <location>
        <position position="603"/>
    </location>
</feature>
<feature type="modified residue" description="4-hydroxyproline" evidence="3">
    <location>
        <position position="621"/>
    </location>
</feature>
<feature type="modified residue" description="4-hydroxyproline" evidence="3">
    <location>
        <position position="630"/>
    </location>
</feature>
<feature type="modified residue" description="4-hydroxyproline" evidence="3">
    <location>
        <position position="639"/>
    </location>
</feature>
<feature type="modified residue" description="5-hydroxylysine" evidence="3">
    <location>
        <position position="642"/>
    </location>
</feature>
<feature type="modified residue" description="4-hydroxyproline" evidence="3">
    <location>
        <position position="651"/>
    </location>
</feature>
<feature type="modified residue" description="4-hydroxyproline" evidence="3">
    <location>
        <position position="657"/>
    </location>
</feature>
<feature type="modified residue" description="3-hydroxyproline" evidence="4">
    <location>
        <position position="665"/>
    </location>
</feature>
<feature type="modified residue" description="4-hydroxyproline" evidence="4">
    <location>
        <position position="666"/>
    </location>
</feature>
<feature type="modified residue" description="4-hydroxyproline" evidence="4">
    <location>
        <position position="675"/>
    </location>
</feature>
<feature type="modified residue" description="4-hydroxyproline" evidence="4">
    <location>
        <position position="678"/>
    </location>
</feature>
<feature type="modified residue" description="4-hydroxyproline" evidence="3">
    <location>
        <position position="704"/>
    </location>
</feature>
<feature type="modified residue" description="4-hydroxyproline" evidence="3">
    <location>
        <position position="712"/>
    </location>
</feature>
<feature type="modified residue" description="4-hydroxyproline" evidence="3">
    <location>
        <position position="721"/>
    </location>
</feature>
<feature type="modified residue" description="4-hydroxyproline" evidence="3">
    <location>
        <position position="739"/>
    </location>
</feature>
<feature type="modified residue" description="4-hydroxyproline" evidence="3">
    <location>
        <position position="748"/>
    </location>
</feature>
<feature type="modified residue" description="4-hydroxyproline" evidence="3">
    <location>
        <position position="751"/>
    </location>
</feature>
<feature type="modified residue" description="4-hydroxyproline" evidence="3">
    <location>
        <position position="757"/>
    </location>
</feature>
<feature type="modified residue" description="4-hydroxyproline" evidence="3">
    <location>
        <position position="772"/>
    </location>
</feature>
<feature type="modified residue" description="4-hydroxyproline" evidence="3">
    <location>
        <position position="778"/>
    </location>
</feature>
<feature type="modified residue" description="4-hydroxyproline" evidence="3">
    <location>
        <position position="784"/>
    </location>
</feature>
<feature type="modified residue" description="4-hydroxyproline" evidence="3">
    <location>
        <position position="792"/>
    </location>
</feature>
<feature type="modified residue" description="4-hydroxyproline" evidence="3">
    <location>
        <position position="798"/>
    </location>
</feature>
<feature type="modified residue" description="5-hydroxylysine" evidence="3">
    <location>
        <position position="807"/>
    </location>
</feature>
<feature type="modified residue" description="4-hydroxyproline" evidence="3">
    <location>
        <position position="818"/>
    </location>
</feature>
<feature type="modified residue" description="4-hydroxyproline" evidence="3">
    <location>
        <position position="821"/>
    </location>
</feature>
<feature type="modified residue" description="4-hydroxyproline" evidence="3">
    <location>
        <position position="824"/>
    </location>
</feature>
<feature type="modified residue" description="5-hydroxylysine" evidence="3">
    <location>
        <position position="868"/>
    </location>
</feature>
<feature type="modified residue" description="5-hydroxylysine; alternate" evidence="3">
    <location>
        <position position="880"/>
    </location>
</feature>
<feature type="modified residue" description="4-hydroxyproline" evidence="3">
    <location>
        <position position="895"/>
    </location>
</feature>
<feature type="modified residue" description="4-hydroxyproline" evidence="3">
    <location>
        <position position="898"/>
    </location>
</feature>
<feature type="modified residue" description="4-hydroxyproline" evidence="3">
    <location>
        <position position="916"/>
    </location>
</feature>
<feature type="modified residue" description="4-hydroxyproline" evidence="4">
    <location>
        <position position="931"/>
    </location>
</feature>
<feature type="modified residue" description="3-hydroxyproline" evidence="4">
    <location>
        <position position="936"/>
    </location>
</feature>
<feature type="modified residue" description="4-hydroxyproline" evidence="4">
    <location>
        <position position="937"/>
    </location>
</feature>
<feature type="modified residue" description="3-hydroxyproline" evidence="4">
    <location>
        <position position="951"/>
    </location>
</feature>
<feature type="modified residue" description="4-hydroxyproline" evidence="4">
    <location>
        <position position="952"/>
    </location>
</feature>
<feature type="modified residue" description="3-hydroxyproline" evidence="4">
    <location>
        <position position="954"/>
    </location>
</feature>
<feature type="modified residue" description="4-hydroxyproline" evidence="4">
    <location>
        <position position="955"/>
    </location>
</feature>
<feature type="modified residue" description="3-hydroxyproline" evidence="4">
    <location>
        <position position="957"/>
    </location>
</feature>
<feature type="modified residue" description="4-hydroxyproline" evidence="4">
    <location>
        <position position="958"/>
    </location>
</feature>
<feature type="modified residue" description="4-hydroxyproline" evidence="4">
    <location>
        <position position="961"/>
    </location>
</feature>
<feature type="modified residue" description="4-hydroxyproline" evidence="4">
    <location>
        <position position="964"/>
    </location>
</feature>
<feature type="glycosylation site" description="O-linked (Gal...) hydroxylysine; alternate" evidence="1">
    <location>
        <position position="92"/>
    </location>
</feature>
<feature type="glycosylation site" description="O-linked (Gal...) hydroxylysine; alternate" evidence="3">
    <location>
        <position position="880"/>
    </location>
</feature>
<feature type="unsure residue" description="I or L" evidence="7">
    <location>
        <position position="3"/>
    </location>
</feature>
<feature type="unsure residue" description="L or I" evidence="7">
    <location>
        <position position="17"/>
    </location>
</feature>
<feature type="unsure residue" description="L or I" evidence="7">
    <location>
        <position position="82"/>
    </location>
</feature>
<feature type="unsure residue" description="L or I" evidence="7">
    <location>
        <position position="88"/>
    </location>
</feature>
<feature type="unsure residue" description="L or I" evidence="7">
    <location>
        <position position="100"/>
    </location>
</feature>
<feature type="unsure residue" description="I or L" evidence="7">
    <location>
        <position position="218"/>
    </location>
</feature>
<feature type="unsure residue" description="I or L" evidence="7">
    <location>
        <position position="265"/>
    </location>
</feature>
<feature type="unsure residue" description="L or I" evidence="7">
    <location>
        <position position="289"/>
    </location>
</feature>
<feature type="unsure residue" description="L or I" evidence="7">
    <location>
        <position position="343"/>
    </location>
</feature>
<feature type="unsure residue" description="L or I" evidence="7">
    <location>
        <position position="349"/>
    </location>
</feature>
<feature type="unsure residue" description="L or I" evidence="7">
    <location>
        <position position="452"/>
    </location>
</feature>
<feature type="unsure residue" description="L or I" evidence="7">
    <location>
        <position position="474"/>
    </location>
</feature>
<feature type="unsure residue" description="L or I" evidence="7">
    <location>
        <position position="506"/>
    </location>
</feature>
<feature type="unsure residue" description="L or I" evidence="7">
    <location>
        <position position="518"/>
    </location>
</feature>
<feature type="unsure residue" description="L or I" evidence="7">
    <location>
        <position position="545"/>
    </location>
</feature>
<feature type="unsure residue" description="I or L" evidence="7">
    <location>
        <position position="549"/>
    </location>
</feature>
<feature type="unsure residue" description="I or L" evidence="7">
    <location>
        <position position="633"/>
    </location>
</feature>
<feature type="unsure residue" description="L or I" evidence="7">
    <location>
        <position position="636"/>
    </location>
</feature>
<feature type="unsure residue" description="I or L" evidence="7">
    <location>
        <position position="729"/>
    </location>
</feature>
<feature type="unsure residue" description="L or I" evidence="7">
    <location>
        <position position="738"/>
    </location>
</feature>
<feature type="unsure residue" description="L or I" evidence="7">
    <location>
        <position position="750"/>
    </location>
</feature>
<feature type="unsure residue" description="L or I" evidence="7">
    <location>
        <position position="780"/>
    </location>
</feature>
<feature type="unsure residue" description="I or L" evidence="7">
    <location>
        <position position="879"/>
    </location>
</feature>
<feature type="unsure residue" description="L or I" evidence="7">
    <location>
        <position position="888"/>
    </location>
</feature>
<feature type="unsure residue" description="L or I" evidence="7">
    <location>
        <position position="927"/>
    </location>
</feature>
<feature type="unsure residue" description="L or I" evidence="7">
    <location>
        <position position="930"/>
    </location>
</feature>
<feature type="unsure residue" description="I or L" evidence="7">
    <location>
        <position position="934"/>
    </location>
</feature>
<feature type="non-consecutive residues" evidence="7">
    <location>
        <begin position="40"/>
        <end position="41"/>
    </location>
</feature>
<feature type="non-consecutive residues" evidence="7">
    <location>
        <begin position="113"/>
        <end position="114"/>
    </location>
</feature>
<feature type="non-consecutive residues" evidence="7">
    <location>
        <begin position="119"/>
        <end position="120"/>
    </location>
</feature>
<feature type="non-consecutive residues" evidence="7">
    <location>
        <begin position="255"/>
        <end position="256"/>
    </location>
</feature>
<feature type="non-consecutive residues" evidence="7">
    <location>
        <begin position="376"/>
        <end position="377"/>
    </location>
</feature>
<feature type="non-consecutive residues" evidence="7">
    <location>
        <begin position="446"/>
        <end position="447"/>
    </location>
</feature>
<feature type="non-consecutive residues" evidence="7">
    <location>
        <begin position="505"/>
        <end position="506"/>
    </location>
</feature>
<feature type="non-consecutive residues" evidence="7">
    <location>
        <begin position="696"/>
        <end position="697"/>
    </location>
</feature>
<feature type="non-consecutive residues" evidence="7">
    <location>
        <begin position="706"/>
        <end position="707"/>
    </location>
</feature>
<feature type="non-consecutive residues" evidence="7">
    <location>
        <begin position="791"/>
        <end position="792"/>
    </location>
</feature>
<feature type="non-consecutive residues" evidence="7">
    <location>
        <begin position="815"/>
        <end position="816"/>
    </location>
</feature>
<feature type="non-consecutive residues" evidence="7">
    <location>
        <begin position="844"/>
        <end position="845"/>
    </location>
</feature>
<feature type="non-terminal residue" evidence="7">
    <location>
        <position position="1"/>
    </location>
</feature>
<feature type="non-terminal residue" evidence="7">
    <location>
        <position position="964"/>
    </location>
</feature>
<protein>
    <recommendedName>
        <fullName evidence="7">Collagen alpha-1(I) chain</fullName>
    </recommendedName>
    <alternativeName>
        <fullName evidence="1">Alpha-1 type I collagen</fullName>
    </alternativeName>
</protein>
<dbReference type="GO" id="GO:0005576">
    <property type="term" value="C:extracellular region"/>
    <property type="evidence" value="ECO:0007669"/>
    <property type="project" value="UniProtKB-SubCell"/>
</dbReference>
<dbReference type="InterPro" id="IPR008160">
    <property type="entry name" value="Collagen"/>
</dbReference>
<dbReference type="InterPro" id="IPR050938">
    <property type="entry name" value="Collagen_Structural_Proteins"/>
</dbReference>
<dbReference type="PANTHER" id="PTHR37456:SF6">
    <property type="entry name" value="COLLAGEN ALPHA-1(XXIII) CHAIN-LIKE ISOFORM X2"/>
    <property type="match status" value="1"/>
</dbReference>
<dbReference type="PANTHER" id="PTHR37456">
    <property type="entry name" value="SI:CH211-266K2.1"/>
    <property type="match status" value="1"/>
</dbReference>
<dbReference type="Pfam" id="PF01391">
    <property type="entry name" value="Collagen"/>
    <property type="match status" value="8"/>
</dbReference>
<comment type="function">
    <text evidence="8">Type I collagen is a member of group I collagen (fibrillar forming collagen).</text>
</comment>
<comment type="subunit">
    <text evidence="8">Trimers of one alpha 2(I) and two alpha 1(I) chains.</text>
</comment>
<comment type="subcellular location">
    <subcellularLocation>
        <location>Secreted</location>
    </subcellularLocation>
    <subcellularLocation>
        <location>Secreted</location>
        <location>Extracellular space</location>
    </subcellularLocation>
    <subcellularLocation>
        <location evidence="8">Secreted</location>
        <location evidence="8">Extracellular space</location>
        <location evidence="8">Extracellular matrix</location>
    </subcellularLocation>
</comment>
<comment type="tissue specificity">
    <text evidence="6">Expressed in bones.</text>
</comment>
<comment type="PTM">
    <text evidence="1">Contains mostly 4-hydroxyproline. Proline residues at the third position of the tripeptide repeating unit (G-X-Y) are hydroxylated in some or all of the chains.</text>
</comment>
<comment type="PTM">
    <text evidence="4">Contains 3-hydroxyproline at a few sites. This modification occurs on the first proline residue in the sequence motif Gly-Pro-Hyp, where Hyp is 4-hydroxyproline.</text>
</comment>
<comment type="PTM">
    <text evidence="1">Lysine residues at the third position of the tripeptide repeating unit (G-X-Y) are 5-hydroxylated in some or all of the chains.</text>
</comment>
<comment type="PTM">
    <text evidence="1">O-glycosylated on hydroxylated lysine residues. The O-linked glycan consists of a Glc-Gal disaccharide.</text>
</comment>
<comment type="miscellaneous">
    <text evidence="6">These protein fragments were extracted from an ancient humerus epiphysis bone collected in Haiti.</text>
</comment>
<comment type="similarity">
    <text evidence="8">Belongs to the fibrillar collagen family.</text>
</comment>
<proteinExistence type="evidence at protein level"/>
<reference evidence="8" key="1">
    <citation type="journal article" date="2019" name="Nat. Ecol. Evol.">
        <title>Palaeoproteomics resolves sloth relationships.</title>
        <authorList>
            <person name="Presslee S."/>
            <person name="Slater G.J."/>
            <person name="Pujos F."/>
            <person name="Forasiepi A.M."/>
            <person name="Fischer R."/>
            <person name="Molloy K."/>
            <person name="Mackie M."/>
            <person name="Olsen J.V."/>
            <person name="Kramarz A."/>
            <person name="Taglioretti M."/>
            <person name="Scaglia F."/>
            <person name="Lezcano M."/>
            <person name="Lanata J.L."/>
            <person name="Southon J."/>
            <person name="Feranec R."/>
            <person name="Bloch J."/>
            <person name="Hajduk A."/>
            <person name="Martin F.M."/>
            <person name="Salas Gismondi R."/>
            <person name="Reguero M."/>
            <person name="de Muizon C."/>
            <person name="Greenwood A."/>
            <person name="Chait B.T."/>
            <person name="Penkman K."/>
            <person name="Collins M."/>
            <person name="MacPhee R.D.E."/>
        </authorList>
    </citation>
    <scope>PROTEIN SEQUENCE</scope>
    <scope>TISSUE SPECIFICITY</scope>
    <scope>IDENTIFICATION BY MASS SPECTROMETRY</scope>
    <source>
        <tissue evidence="7">Bone</tissue>
    </source>
</reference>
<organism evidence="7">
    <name type="scientific">Parocnus serus</name>
    <name type="common">Greater Haitian ground sloth</name>
    <dbReference type="NCBI Taxonomy" id="2546659"/>
    <lineage>
        <taxon>Eukaryota</taxon>
        <taxon>Metazoa</taxon>
        <taxon>Chordata</taxon>
        <taxon>Craniata</taxon>
        <taxon>Vertebrata</taxon>
        <taxon>Euteleostomi</taxon>
        <taxon>Mammalia</taxon>
        <taxon>Eutheria</taxon>
        <taxon>Xenarthra</taxon>
        <taxon>Pilosa</taxon>
        <taxon>Folivora</taxon>
        <taxon>Megalonychidae</taxon>
        <taxon>Parocnus</taxon>
    </lineage>
</organism>
<name>CO1A1_PARSU</name>